<sequence>MSDHYAVVGNPIAHSKSPQIHTRFAAEVGADLHYHRLWAPEDHFAPVAEAFFAGGGHGLNVTVPFKGAAYTFADTLSDRARAAGAVNTLRAEPDGRHFGDNTDGIGLLRDLQTNHGIDLAGRRLLLLGAGGAARGVLHDLLGEDPRTVVIANRTVDRAEALAGNDHRIRACGFDVLAGERFEVVINTTAAGLQGEMPPLPDDLLAPGATAYDLVYADEDTPFMAWARARGAVTVCDGLGMLVEQAAESFYQWRGTYPQTAPVIEALRIGA</sequence>
<keyword id="KW-0028">Amino-acid biosynthesis</keyword>
<keyword id="KW-0057">Aromatic amino acid biosynthesis</keyword>
<keyword id="KW-0521">NADP</keyword>
<keyword id="KW-0560">Oxidoreductase</keyword>
<keyword id="KW-1185">Reference proteome</keyword>
<feature type="chain" id="PRO_0000325121" description="Shikimate dehydrogenase (NADP(+))">
    <location>
        <begin position="1"/>
        <end position="270"/>
    </location>
</feature>
<feature type="active site" description="Proton acceptor" evidence="1">
    <location>
        <position position="66"/>
    </location>
</feature>
<feature type="binding site" evidence="1">
    <location>
        <begin position="15"/>
        <end position="17"/>
    </location>
    <ligand>
        <name>shikimate</name>
        <dbReference type="ChEBI" id="CHEBI:36208"/>
    </ligand>
</feature>
<feature type="binding site" evidence="1">
    <location>
        <position position="62"/>
    </location>
    <ligand>
        <name>shikimate</name>
        <dbReference type="ChEBI" id="CHEBI:36208"/>
    </ligand>
</feature>
<feature type="binding site" evidence="1">
    <location>
        <position position="78"/>
    </location>
    <ligand>
        <name>NADP(+)</name>
        <dbReference type="ChEBI" id="CHEBI:58349"/>
    </ligand>
</feature>
<feature type="binding site" evidence="1">
    <location>
        <position position="87"/>
    </location>
    <ligand>
        <name>shikimate</name>
        <dbReference type="ChEBI" id="CHEBI:36208"/>
    </ligand>
</feature>
<feature type="binding site" evidence="1">
    <location>
        <position position="103"/>
    </location>
    <ligand>
        <name>shikimate</name>
        <dbReference type="ChEBI" id="CHEBI:36208"/>
    </ligand>
</feature>
<feature type="binding site" evidence="1">
    <location>
        <begin position="128"/>
        <end position="132"/>
    </location>
    <ligand>
        <name>NADP(+)</name>
        <dbReference type="ChEBI" id="CHEBI:58349"/>
    </ligand>
</feature>
<feature type="binding site" evidence="1">
    <location>
        <begin position="152"/>
        <end position="157"/>
    </location>
    <ligand>
        <name>NADP(+)</name>
        <dbReference type="ChEBI" id="CHEBI:58349"/>
    </ligand>
</feature>
<feature type="binding site" evidence="1">
    <location>
        <position position="213"/>
    </location>
    <ligand>
        <name>NADP(+)</name>
        <dbReference type="ChEBI" id="CHEBI:58349"/>
    </ligand>
</feature>
<feature type="binding site" evidence="1">
    <location>
        <position position="215"/>
    </location>
    <ligand>
        <name>shikimate</name>
        <dbReference type="ChEBI" id="CHEBI:36208"/>
    </ligand>
</feature>
<feature type="binding site" evidence="1">
    <location>
        <position position="237"/>
    </location>
    <ligand>
        <name>NADP(+)</name>
        <dbReference type="ChEBI" id="CHEBI:58349"/>
    </ligand>
</feature>
<dbReference type="EC" id="1.1.1.25" evidence="1"/>
<dbReference type="EMBL" id="CP000544">
    <property type="protein sequence ID" value="ABM61830.1"/>
    <property type="molecule type" value="Genomic_DNA"/>
</dbReference>
<dbReference type="RefSeq" id="WP_011813853.1">
    <property type="nucleotide sequence ID" value="NC_008789.1"/>
</dbReference>
<dbReference type="SMR" id="A1WVW8"/>
<dbReference type="STRING" id="349124.Hhal_1054"/>
<dbReference type="KEGG" id="hha:Hhal_1054"/>
<dbReference type="eggNOG" id="COG0169">
    <property type="taxonomic scope" value="Bacteria"/>
</dbReference>
<dbReference type="HOGENOM" id="CLU_044063_2_1_6"/>
<dbReference type="OrthoDB" id="9776868at2"/>
<dbReference type="UniPathway" id="UPA00053">
    <property type="reaction ID" value="UER00087"/>
</dbReference>
<dbReference type="Proteomes" id="UP000000647">
    <property type="component" value="Chromosome"/>
</dbReference>
<dbReference type="GO" id="GO:0005829">
    <property type="term" value="C:cytosol"/>
    <property type="evidence" value="ECO:0007669"/>
    <property type="project" value="TreeGrafter"/>
</dbReference>
<dbReference type="GO" id="GO:0050661">
    <property type="term" value="F:NADP binding"/>
    <property type="evidence" value="ECO:0007669"/>
    <property type="project" value="InterPro"/>
</dbReference>
<dbReference type="GO" id="GO:0004764">
    <property type="term" value="F:shikimate 3-dehydrogenase (NADP+) activity"/>
    <property type="evidence" value="ECO:0007669"/>
    <property type="project" value="UniProtKB-UniRule"/>
</dbReference>
<dbReference type="GO" id="GO:0008652">
    <property type="term" value="P:amino acid biosynthetic process"/>
    <property type="evidence" value="ECO:0007669"/>
    <property type="project" value="UniProtKB-KW"/>
</dbReference>
<dbReference type="GO" id="GO:0009073">
    <property type="term" value="P:aromatic amino acid family biosynthetic process"/>
    <property type="evidence" value="ECO:0007669"/>
    <property type="project" value="UniProtKB-KW"/>
</dbReference>
<dbReference type="GO" id="GO:0009423">
    <property type="term" value="P:chorismate biosynthetic process"/>
    <property type="evidence" value="ECO:0007669"/>
    <property type="project" value="UniProtKB-UniRule"/>
</dbReference>
<dbReference type="GO" id="GO:0019632">
    <property type="term" value="P:shikimate metabolic process"/>
    <property type="evidence" value="ECO:0007669"/>
    <property type="project" value="InterPro"/>
</dbReference>
<dbReference type="CDD" id="cd01065">
    <property type="entry name" value="NAD_bind_Shikimate_DH"/>
    <property type="match status" value="1"/>
</dbReference>
<dbReference type="FunFam" id="3.40.50.10860:FF:000006">
    <property type="entry name" value="Shikimate dehydrogenase (NADP(+))"/>
    <property type="match status" value="1"/>
</dbReference>
<dbReference type="Gene3D" id="3.40.50.10860">
    <property type="entry name" value="Leucine Dehydrogenase, chain A, domain 1"/>
    <property type="match status" value="1"/>
</dbReference>
<dbReference type="Gene3D" id="3.40.50.720">
    <property type="entry name" value="NAD(P)-binding Rossmann-like Domain"/>
    <property type="match status" value="1"/>
</dbReference>
<dbReference type="HAMAP" id="MF_00222">
    <property type="entry name" value="Shikimate_DH_AroE"/>
    <property type="match status" value="1"/>
</dbReference>
<dbReference type="InterPro" id="IPR046346">
    <property type="entry name" value="Aminoacid_DH-like_N_sf"/>
</dbReference>
<dbReference type="InterPro" id="IPR036291">
    <property type="entry name" value="NAD(P)-bd_dom_sf"/>
</dbReference>
<dbReference type="InterPro" id="IPR041121">
    <property type="entry name" value="SDH_C"/>
</dbReference>
<dbReference type="InterPro" id="IPR011342">
    <property type="entry name" value="Shikimate_DH"/>
</dbReference>
<dbReference type="InterPro" id="IPR013708">
    <property type="entry name" value="Shikimate_DH-bd_N"/>
</dbReference>
<dbReference type="InterPro" id="IPR022893">
    <property type="entry name" value="Shikimate_DH_fam"/>
</dbReference>
<dbReference type="InterPro" id="IPR006151">
    <property type="entry name" value="Shikm_DH/Glu-tRNA_Rdtase"/>
</dbReference>
<dbReference type="NCBIfam" id="TIGR00507">
    <property type="entry name" value="aroE"/>
    <property type="match status" value="1"/>
</dbReference>
<dbReference type="NCBIfam" id="NF001310">
    <property type="entry name" value="PRK00258.1-2"/>
    <property type="match status" value="1"/>
</dbReference>
<dbReference type="PANTHER" id="PTHR21089:SF1">
    <property type="entry name" value="BIFUNCTIONAL 3-DEHYDROQUINATE DEHYDRATASE_SHIKIMATE DEHYDROGENASE, CHLOROPLASTIC"/>
    <property type="match status" value="1"/>
</dbReference>
<dbReference type="PANTHER" id="PTHR21089">
    <property type="entry name" value="SHIKIMATE DEHYDROGENASE"/>
    <property type="match status" value="1"/>
</dbReference>
<dbReference type="Pfam" id="PF18317">
    <property type="entry name" value="SDH_C"/>
    <property type="match status" value="1"/>
</dbReference>
<dbReference type="Pfam" id="PF01488">
    <property type="entry name" value="Shikimate_DH"/>
    <property type="match status" value="1"/>
</dbReference>
<dbReference type="Pfam" id="PF08501">
    <property type="entry name" value="Shikimate_dh_N"/>
    <property type="match status" value="1"/>
</dbReference>
<dbReference type="SUPFAM" id="SSF53223">
    <property type="entry name" value="Aminoacid dehydrogenase-like, N-terminal domain"/>
    <property type="match status" value="1"/>
</dbReference>
<dbReference type="SUPFAM" id="SSF51735">
    <property type="entry name" value="NAD(P)-binding Rossmann-fold domains"/>
    <property type="match status" value="1"/>
</dbReference>
<organism>
    <name type="scientific">Halorhodospira halophila (strain DSM 244 / SL1)</name>
    <name type="common">Ectothiorhodospira halophila (strain DSM 244 / SL1)</name>
    <dbReference type="NCBI Taxonomy" id="349124"/>
    <lineage>
        <taxon>Bacteria</taxon>
        <taxon>Pseudomonadati</taxon>
        <taxon>Pseudomonadota</taxon>
        <taxon>Gammaproteobacteria</taxon>
        <taxon>Chromatiales</taxon>
        <taxon>Ectothiorhodospiraceae</taxon>
        <taxon>Halorhodospira</taxon>
    </lineage>
</organism>
<name>AROE_HALHL</name>
<gene>
    <name evidence="1" type="primary">aroE</name>
    <name type="ordered locus">Hhal_1054</name>
</gene>
<proteinExistence type="inferred from homology"/>
<reference key="1">
    <citation type="submission" date="2006-12" db="EMBL/GenBank/DDBJ databases">
        <title>Complete sequence of Halorhodospira halophila SL1.</title>
        <authorList>
            <consortium name="US DOE Joint Genome Institute"/>
            <person name="Copeland A."/>
            <person name="Lucas S."/>
            <person name="Lapidus A."/>
            <person name="Barry K."/>
            <person name="Detter J.C."/>
            <person name="Glavina del Rio T."/>
            <person name="Hammon N."/>
            <person name="Israni S."/>
            <person name="Dalin E."/>
            <person name="Tice H."/>
            <person name="Pitluck S."/>
            <person name="Saunders E."/>
            <person name="Brettin T."/>
            <person name="Bruce D."/>
            <person name="Han C."/>
            <person name="Tapia R."/>
            <person name="Schmutz J."/>
            <person name="Larimer F."/>
            <person name="Land M."/>
            <person name="Hauser L."/>
            <person name="Kyrpides N."/>
            <person name="Mikhailova N."/>
            <person name="Hoff W."/>
            <person name="Richardson P."/>
        </authorList>
    </citation>
    <scope>NUCLEOTIDE SEQUENCE [LARGE SCALE GENOMIC DNA]</scope>
    <source>
        <strain>DSM 244 / SL1</strain>
    </source>
</reference>
<protein>
    <recommendedName>
        <fullName evidence="1">Shikimate dehydrogenase (NADP(+))</fullName>
        <shortName evidence="1">SDH</shortName>
        <ecNumber evidence="1">1.1.1.25</ecNumber>
    </recommendedName>
</protein>
<accession>A1WVW8</accession>
<comment type="function">
    <text evidence="1">Involved in the biosynthesis of the chorismate, which leads to the biosynthesis of aromatic amino acids. Catalyzes the reversible NADPH linked reduction of 3-dehydroshikimate (DHSA) to yield shikimate (SA).</text>
</comment>
<comment type="catalytic activity">
    <reaction evidence="1">
        <text>shikimate + NADP(+) = 3-dehydroshikimate + NADPH + H(+)</text>
        <dbReference type="Rhea" id="RHEA:17737"/>
        <dbReference type="ChEBI" id="CHEBI:15378"/>
        <dbReference type="ChEBI" id="CHEBI:16630"/>
        <dbReference type="ChEBI" id="CHEBI:36208"/>
        <dbReference type="ChEBI" id="CHEBI:57783"/>
        <dbReference type="ChEBI" id="CHEBI:58349"/>
        <dbReference type="EC" id="1.1.1.25"/>
    </reaction>
</comment>
<comment type="pathway">
    <text evidence="1">Metabolic intermediate biosynthesis; chorismate biosynthesis; chorismate from D-erythrose 4-phosphate and phosphoenolpyruvate: step 4/7.</text>
</comment>
<comment type="subunit">
    <text evidence="1">Homodimer.</text>
</comment>
<comment type="similarity">
    <text evidence="1">Belongs to the shikimate dehydrogenase family.</text>
</comment>
<evidence type="ECO:0000255" key="1">
    <source>
        <dbReference type="HAMAP-Rule" id="MF_00222"/>
    </source>
</evidence>